<accession>Q01826</accession>
<accession>B3KXF1</accession>
<accession>C9JTR6</accession>
<accession>Q59EQ0</accession>
<proteinExistence type="evidence at protein level"/>
<organism>
    <name type="scientific">Homo sapiens</name>
    <name type="common">Human</name>
    <dbReference type="NCBI Taxonomy" id="9606"/>
    <lineage>
        <taxon>Eukaryota</taxon>
        <taxon>Metazoa</taxon>
        <taxon>Chordata</taxon>
        <taxon>Craniata</taxon>
        <taxon>Vertebrata</taxon>
        <taxon>Euteleostomi</taxon>
        <taxon>Mammalia</taxon>
        <taxon>Eutheria</taxon>
        <taxon>Euarchontoglires</taxon>
        <taxon>Primates</taxon>
        <taxon>Haplorrhini</taxon>
        <taxon>Catarrhini</taxon>
        <taxon>Hominidae</taxon>
        <taxon>Homo</taxon>
    </lineage>
</organism>
<protein>
    <recommendedName>
        <fullName evidence="39">DNA-binding protein SATB1</fullName>
    </recommendedName>
    <alternativeName>
        <fullName>Special AT-rich sequence-binding protein 1</fullName>
    </alternativeName>
</protein>
<keyword id="KW-0002">3D-structure</keyword>
<keyword id="KW-0007">Acetylation</keyword>
<keyword id="KW-0025">Alternative splicing</keyword>
<keyword id="KW-0156">Chromatin regulator</keyword>
<keyword id="KW-0160">Chromosomal rearrangement</keyword>
<keyword id="KW-0225">Disease variant</keyword>
<keyword id="KW-0238">DNA-binding</keyword>
<keyword id="KW-0371">Homeobox</keyword>
<keyword id="KW-0945">Host-virus interaction</keyword>
<keyword id="KW-0991">Intellectual disability</keyword>
<keyword id="KW-1017">Isopeptide bond</keyword>
<keyword id="KW-0539">Nucleus</keyword>
<keyword id="KW-0597">Phosphoprotein</keyword>
<keyword id="KW-1267">Proteomics identification</keyword>
<keyword id="KW-1185">Reference proteome</keyword>
<keyword id="KW-0677">Repeat</keyword>
<keyword id="KW-0678">Repressor</keyword>
<keyword id="KW-0804">Transcription</keyword>
<keyword id="KW-0805">Transcription regulation</keyword>
<keyword id="KW-0832">Ubl conjugation</keyword>
<name>SATB1_HUMAN</name>
<comment type="function">
    <text evidence="2 8 10 12 13 15 17 18 22 23 24 25 29 31 32 33 34 35 36 37">Crucial silencing factor contributing to the initiation of X inactivation mediated by Xist RNA that occurs during embryogenesis and in lymphoma (By similarity). Binds to DNA at special AT-rich sequences, the consensus SATB1-binding sequence (CSBS), at nuclear matrix- or scaffold-associated regions. Thought to recognize the sugar-phosphate structure of double-stranded DNA. Transcriptional repressor controlling nuclear and viral gene expression in a phosphorylated and acetylated status-dependent manner, by binding to matrix attachment regions (MARs) of DNA and inducing a local chromatin-loop remodeling. Acts as a docking site for several chromatin remodeling enzymes (e.g. PML at the MHC-I locus) and also by recruiting corepressors (HDACs) or coactivators (HATs) directly to promoters and enhancers. Modulates genes that are essential in the maturation of the immune T-cell CD8SP from thymocytes. Required for the switching of fetal globin species, and beta- and gamma-globin genes regulation during erythroid differentiation. Plays a role in chromatin organization and nuclear architecture during apoptosis. Interacts with the unique region (UR) of cytomegalovirus (CMV). Alu-like motifs and SATB1-binding sites provide a unique chromatin context which seems preferentially targeted by the HIV-1 integration machinery. Moreover, HIV-1 Tat may overcome SATB1-mediated repression of IL2 and IL2RA (interleukin) in T-cells by binding to the same domain than HDAC1. Delineates specific epigenetic modifications at target gene loci, directly up-regulating metastasis-associated genes while down-regulating tumor-suppressor genes. Reprograms chromatin organization and the transcription profiles of breast tumors to promote growth and metastasis. Promotes neuronal differentiation of neural stem/progenitor cells in the adult subventricular zone, possibly by positively regulating the expression of NEUROD1 (By similarity).</text>
</comment>
<comment type="subunit">
    <text evidence="1 8 10 11 14 18 20 21 23 24 26 27 28 31">Interacts with CUX1 (via DNA-binding domains); the interaction inhibits the attachment of both proteins to DNA (By similarity). Homodimer. Part of the nuclear protein complex gamma-globin promoter and enhancer binding factor (gamma-PE) composed at least of SATB1 and HOXB2. Interaction with CtBP1 when not acetylated stabilizes attachment to DNA and promotes transcription repression. Interacts with PCAF. Interacts with sumoylated PML and HDAC1 via the CMP domain. Interacts also with DYNLT3 and POLR2J2. Binds to EP300.</text>
</comment>
<comment type="subunit">
    <text evidence="18">(Microbial infection) Interacts (via the CMP domain) with HIV-1 Tat.</text>
</comment>
<comment type="interaction">
    <interactant intactId="EBI-743747">
        <id>Q01826</id>
    </interactant>
    <interactant intactId="EBI-718729">
        <id>P55212</id>
        <label>CASP6</label>
    </interactant>
    <organismsDiffer>false</organismsDiffer>
    <experiments>2</experiments>
</comment>
<comment type="interaction">
    <interactant intactId="EBI-743747">
        <id>Q01826</id>
    </interactant>
    <interactant intactId="EBI-491549">
        <id>P35222</id>
        <label>CTNNB1</label>
    </interactant>
    <organismsDiffer>false</organismsDiffer>
    <experiments>9</experiments>
</comment>
<comment type="interaction">
    <interactant intactId="EBI-743747">
        <id>Q01826</id>
    </interactant>
    <interactant intactId="EBI-1053596">
        <id>Q13627</id>
        <label>DYRK1A</label>
    </interactant>
    <organismsDiffer>false</organismsDiffer>
    <experiments>2</experiments>
</comment>
<comment type="interaction">
    <interactant intactId="EBI-743747">
        <id>Q01826</id>
    </interactant>
    <interactant intactId="EBI-16439278">
        <id>Q6FHY5</id>
        <label>MEOX2</label>
    </interactant>
    <organismsDiffer>false</organismsDiffer>
    <experiments>3</experiments>
</comment>
<comment type="interaction">
    <interactant intactId="EBI-743747">
        <id>Q01826</id>
    </interactant>
    <interactant intactId="EBI-742688">
        <id>Q9NZD8</id>
        <label>SPG21</label>
    </interactant>
    <organismsDiffer>false</organismsDiffer>
    <experiments>3</experiments>
</comment>
<comment type="interaction">
    <interactant intactId="EBI-743747">
        <id>Q01826</id>
    </interactant>
    <interactant intactId="EBI-80140">
        <id>P63165</id>
        <label>SUMO1</label>
    </interactant>
    <organismsDiffer>false</organismsDiffer>
    <experiments>2</experiments>
</comment>
<comment type="interaction">
    <interactant intactId="EBI-743747">
        <id>Q01826</id>
    </interactant>
    <interactant intactId="EBI-10175576">
        <id>G2XKQ0</id>
        <label>SUMO1P1</label>
    </interactant>
    <organismsDiffer>false</organismsDiffer>
    <experiments>3</experiments>
</comment>
<comment type="subcellular location">
    <subcellularLocation>
        <location evidence="9 30">Nucleus matrix</location>
    </subcellularLocation>
    <subcellularLocation>
        <location evidence="30">Nucleus</location>
        <location evidence="30">PML body</location>
    </subcellularLocation>
    <text evidence="13 30">Organized into a cage-like network anchoring loops of heterochromatin and tethering specialized DNA sequences (PubMed:12692553). When sumoylated, localized in promyelocytic leukemia nuclear bodies (PML NBs) (PubMed:18408014).</text>
</comment>
<comment type="alternative products">
    <event type="alternative splicing"/>
    <isoform>
        <id>Q01826-1</id>
        <name>1</name>
        <sequence type="displayed"/>
    </isoform>
    <isoform>
        <id>Q01826-2</id>
        <name>2</name>
        <sequence type="described" ref="VSP_038296"/>
    </isoform>
</comment>
<comment type="tissue specificity">
    <text evidence="15">Expressed predominantly in thymus.</text>
</comment>
<comment type="PTM">
    <text evidence="16 30">Sumoylated. Sumoylation promotes cleavage by caspases.</text>
</comment>
<comment type="PTM">
    <text evidence="23">Phosphorylated by PKC. Acetylated by PCAF. Phosphorylated form interacts with HDAC1, but unphosphorylated form interacts with PCAF. DNA binding properties are activated by phosphorylation and inactivated by acetylation. In opposition, gene expression is down-regulated by phosphorylation but up-regulated by acetylation.</text>
</comment>
<comment type="PTM">
    <text evidence="16 30">Cleaved at Asp-254 by caspase-3 and caspase-6 during T-cell apoptosis in thymus and during B-cell stimulation. The cleaved forms cannot dimerize and lose transcription regulation function because of impaired DNA and chromatin association.</text>
</comment>
<comment type="disease" evidence="35">
    <disease id="DI-06058">
        <name>Den Hoed-de Boer-Voisin syndrome</name>
        <acronym>DHDBV</acronym>
        <description>A disorder characterized by global developmental delay, moderately to severely impaired intellectual development, poor or absent speech, delayed motor skills, and early-onset epilepsy in many patients. Most affected individuals have feeding difficulties, poor overall growth, dysmorphic facial features, and significant dental anomalies resembling amelogenesis imperfecta. More variable features include visual defects, behavioral abnormalities, and non-specific involvement of other organ systems. DHDBV transmission pattern is consistent with autosomal dominant inheritance with incomplete penetrance and variable expressivity.</description>
        <dbReference type="MIM" id="619229"/>
    </disease>
    <text>The disease is caused by variants affecting the gene represented in this entry.</text>
</comment>
<comment type="disease" evidence="35">
    <disease id="DI-06057">
        <name>Developmental delay with dysmorphic facies and dental anomalies</name>
        <acronym>DEFDA</acronym>
        <description>A disorder characterized by mild global developmental delay, impaired intellectual development, walking by 2 to 3 years, and slow language acquisition. The severity of the disorder ranges from moderate cognitive deficits to mild learning difficulties or behavioral abnormalities. Most patients have dysmorphic facial features, abnormal dentition and non-specific visual defects. DEFDA transmission pattern is consistent with autosomal dominant inheritance with incomplete penetrance and variable expressivity.</description>
        <dbReference type="MIM" id="619228"/>
    </disease>
    <text>The disease is caused by variants affecting the gene represented in this entry.</text>
</comment>
<comment type="similarity">
    <text evidence="39">Belongs to the CUT homeobox family.</text>
</comment>
<comment type="sequence caution" evidence="39">
    <conflict type="erroneous initiation">
        <sequence resource="EMBL-CDS" id="BAD92998"/>
    </conflict>
    <text>Extended N-terminus.</text>
</comment>
<comment type="online information" name="Atlas of Genetics and Cytogenetics in Oncology and Haematology">
    <link uri="https://atlasgeneticsoncology.org/gene/44225/SATB1"/>
</comment>
<dbReference type="EMBL" id="M97287">
    <property type="protein sequence ID" value="AAA60304.1"/>
    <property type="molecule type" value="mRNA"/>
</dbReference>
<dbReference type="EMBL" id="AK127242">
    <property type="protein sequence ID" value="BAG54463.1"/>
    <property type="molecule type" value="mRNA"/>
</dbReference>
<dbReference type="EMBL" id="AB209761">
    <property type="protein sequence ID" value="BAD92998.1"/>
    <property type="status" value="ALT_INIT"/>
    <property type="molecule type" value="mRNA"/>
</dbReference>
<dbReference type="EMBL" id="AC139618">
    <property type="status" value="NOT_ANNOTATED_CDS"/>
    <property type="molecule type" value="Genomic_DNA"/>
</dbReference>
<dbReference type="EMBL" id="AC144521">
    <property type="status" value="NOT_ANNOTATED_CDS"/>
    <property type="molecule type" value="Genomic_DNA"/>
</dbReference>
<dbReference type="EMBL" id="CH471055">
    <property type="protein sequence ID" value="EAW64291.1"/>
    <property type="molecule type" value="Genomic_DNA"/>
</dbReference>
<dbReference type="EMBL" id="BC001744">
    <property type="protein sequence ID" value="AAH01744.1"/>
    <property type="molecule type" value="mRNA"/>
</dbReference>
<dbReference type="CCDS" id="CCDS2631.1">
    <molecule id="Q01826-1"/>
</dbReference>
<dbReference type="CCDS" id="CCDS56242.1">
    <molecule id="Q01826-2"/>
</dbReference>
<dbReference type="PIR" id="A43314">
    <property type="entry name" value="A43314"/>
</dbReference>
<dbReference type="RefSeq" id="NP_001124482.1">
    <molecule id="Q01826-1"/>
    <property type="nucleotide sequence ID" value="NM_001131010.4"/>
</dbReference>
<dbReference type="RefSeq" id="NP_001182399.1">
    <molecule id="Q01826-2"/>
    <property type="nucleotide sequence ID" value="NM_001195470.3"/>
</dbReference>
<dbReference type="RefSeq" id="NP_001309800.1">
    <molecule id="Q01826-2"/>
    <property type="nucleotide sequence ID" value="NM_001322871.2"/>
</dbReference>
<dbReference type="RefSeq" id="NP_001309801.1">
    <molecule id="Q01826-1"/>
    <property type="nucleotide sequence ID" value="NM_001322872.2"/>
</dbReference>
<dbReference type="RefSeq" id="NP_001309802.1">
    <molecule id="Q01826-1"/>
    <property type="nucleotide sequence ID" value="NM_001322873.2"/>
</dbReference>
<dbReference type="RefSeq" id="NP_001309803.1">
    <molecule id="Q01826-1"/>
    <property type="nucleotide sequence ID" value="NM_001322874.2"/>
</dbReference>
<dbReference type="RefSeq" id="NP_001309804.1">
    <molecule id="Q01826-1"/>
    <property type="nucleotide sequence ID" value="NM_001322875.2"/>
</dbReference>
<dbReference type="RefSeq" id="NP_002962.1">
    <molecule id="Q01826-1"/>
    <property type="nucleotide sequence ID" value="NM_002971.6"/>
</dbReference>
<dbReference type="RefSeq" id="XP_011532290.1">
    <molecule id="Q01826-2"/>
    <property type="nucleotide sequence ID" value="XM_011533988.4"/>
</dbReference>
<dbReference type="RefSeq" id="XP_011532291.1">
    <molecule id="Q01826-2"/>
    <property type="nucleotide sequence ID" value="XM_011533989.3"/>
</dbReference>
<dbReference type="RefSeq" id="XP_054203456.1">
    <molecule id="Q01826-2"/>
    <property type="nucleotide sequence ID" value="XM_054347481.1"/>
</dbReference>
<dbReference type="RefSeq" id="XP_054203457.1">
    <molecule id="Q01826-2"/>
    <property type="nucleotide sequence ID" value="XM_054347482.1"/>
</dbReference>
<dbReference type="PDB" id="1YSE">
    <property type="method" value="NMR"/>
    <property type="chains" value="A=353-490"/>
</dbReference>
<dbReference type="PDB" id="2L1P">
    <property type="method" value="NMR"/>
    <property type="chains" value="A=179-250"/>
</dbReference>
<dbReference type="PDB" id="2MW8">
    <property type="method" value="NMR"/>
    <property type="chains" value="A=641-707"/>
</dbReference>
<dbReference type="PDB" id="2O49">
    <property type="method" value="X-ray"/>
    <property type="resolution" value="2.00 A"/>
    <property type="chains" value="A=368-452"/>
</dbReference>
<dbReference type="PDB" id="2O4A">
    <property type="method" value="X-ray"/>
    <property type="resolution" value="1.75 A"/>
    <property type="chains" value="A=368-452"/>
</dbReference>
<dbReference type="PDB" id="3NZL">
    <property type="method" value="X-ray"/>
    <property type="resolution" value="1.20 A"/>
    <property type="chains" value="A=179-250"/>
</dbReference>
<dbReference type="PDB" id="3TUO">
    <property type="method" value="X-ray"/>
    <property type="resolution" value="1.70 A"/>
    <property type="chains" value="A/B/C/D=71-171"/>
</dbReference>
<dbReference type="PDB" id="6LFF">
    <property type="method" value="X-ray"/>
    <property type="resolution" value="1.79 A"/>
    <property type="chains" value="A/B=368-452"/>
</dbReference>
<dbReference type="PDBsum" id="1YSE"/>
<dbReference type="PDBsum" id="2L1P"/>
<dbReference type="PDBsum" id="2MW8"/>
<dbReference type="PDBsum" id="2O49"/>
<dbReference type="PDBsum" id="2O4A"/>
<dbReference type="PDBsum" id="3NZL"/>
<dbReference type="PDBsum" id="3TUO"/>
<dbReference type="PDBsum" id="6LFF"/>
<dbReference type="BMRB" id="Q01826"/>
<dbReference type="SMR" id="Q01826"/>
<dbReference type="BioGRID" id="112211">
    <property type="interactions" value="117"/>
</dbReference>
<dbReference type="DIP" id="DIP-48757N"/>
<dbReference type="FunCoup" id="Q01826">
    <property type="interactions" value="2025"/>
</dbReference>
<dbReference type="IntAct" id="Q01826">
    <property type="interactions" value="79"/>
</dbReference>
<dbReference type="MINT" id="Q01826"/>
<dbReference type="STRING" id="9606.ENSP00000399518"/>
<dbReference type="GlyCosmos" id="Q01826">
    <property type="glycosylation" value="2 sites, 2 glycans"/>
</dbReference>
<dbReference type="GlyGen" id="Q01826">
    <property type="glycosylation" value="2 sites, 2 O-linked glycans (2 sites)"/>
</dbReference>
<dbReference type="iPTMnet" id="Q01826"/>
<dbReference type="MetOSite" id="Q01826"/>
<dbReference type="PhosphoSitePlus" id="Q01826"/>
<dbReference type="BioMuta" id="SATB1"/>
<dbReference type="DMDM" id="417747"/>
<dbReference type="jPOST" id="Q01826"/>
<dbReference type="MassIVE" id="Q01826"/>
<dbReference type="PaxDb" id="9606-ENSP00000399518"/>
<dbReference type="PeptideAtlas" id="Q01826"/>
<dbReference type="ProteomicsDB" id="58001">
    <molecule id="Q01826-1"/>
</dbReference>
<dbReference type="ProteomicsDB" id="58002">
    <molecule id="Q01826-2"/>
</dbReference>
<dbReference type="Pumba" id="Q01826"/>
<dbReference type="Antibodypedia" id="11251">
    <property type="antibodies" value="528 antibodies from 43 providers"/>
</dbReference>
<dbReference type="DNASU" id="6304"/>
<dbReference type="Ensembl" id="ENST00000338745.11">
    <molecule id="Q01826-1"/>
    <property type="protein sequence ID" value="ENSP00000341024.5"/>
    <property type="gene ID" value="ENSG00000182568.18"/>
</dbReference>
<dbReference type="Ensembl" id="ENST00000415069.6">
    <molecule id="Q01826-1"/>
    <property type="protein sequence ID" value="ENSP00000390529.2"/>
    <property type="gene ID" value="ENSG00000182568.18"/>
</dbReference>
<dbReference type="Ensembl" id="ENST00000417717.6">
    <molecule id="Q01826-2"/>
    <property type="protein sequence ID" value="ENSP00000399518.1"/>
    <property type="gene ID" value="ENSG00000182568.18"/>
</dbReference>
<dbReference type="Ensembl" id="ENST00000454909.6">
    <molecule id="Q01826-1"/>
    <property type="protein sequence ID" value="ENSP00000399708.2"/>
    <property type="gene ID" value="ENSG00000182568.18"/>
</dbReference>
<dbReference type="Ensembl" id="ENST00000457005.6">
    <molecule id="Q01826-1"/>
    <property type="protein sequence ID" value="ENSP00000398072.2"/>
    <property type="gene ID" value="ENSG00000182568.18"/>
</dbReference>
<dbReference type="Ensembl" id="ENST00000700177.1">
    <molecule id="Q01826-1"/>
    <property type="protein sequence ID" value="ENSP00000514845.1"/>
    <property type="gene ID" value="ENSG00000182568.18"/>
</dbReference>
<dbReference type="Ensembl" id="ENST00000700178.1">
    <molecule id="Q01826-1"/>
    <property type="protein sequence ID" value="ENSP00000514846.1"/>
    <property type="gene ID" value="ENSG00000182568.18"/>
</dbReference>
<dbReference type="Ensembl" id="ENST00000700179.1">
    <molecule id="Q01826-1"/>
    <property type="protein sequence ID" value="ENSP00000514847.1"/>
    <property type="gene ID" value="ENSG00000182568.18"/>
</dbReference>
<dbReference type="Ensembl" id="ENST00000700180.1">
    <molecule id="Q01826-1"/>
    <property type="protein sequence ID" value="ENSP00000514848.1"/>
    <property type="gene ID" value="ENSG00000182568.18"/>
</dbReference>
<dbReference type="GeneID" id="6304"/>
<dbReference type="KEGG" id="hsa:6304"/>
<dbReference type="MANE-Select" id="ENST00000338745.11">
    <property type="protein sequence ID" value="ENSP00000341024.5"/>
    <property type="RefSeq nucleotide sequence ID" value="NM_002971.6"/>
    <property type="RefSeq protein sequence ID" value="NP_002962.1"/>
</dbReference>
<dbReference type="UCSC" id="uc003cbh.4">
    <molecule id="Q01826-1"/>
    <property type="organism name" value="human"/>
</dbReference>
<dbReference type="AGR" id="HGNC:10541"/>
<dbReference type="CTD" id="6304"/>
<dbReference type="DisGeNET" id="6304"/>
<dbReference type="GeneCards" id="SATB1"/>
<dbReference type="HGNC" id="HGNC:10541">
    <property type="gene designation" value="SATB1"/>
</dbReference>
<dbReference type="HPA" id="ENSG00000182568">
    <property type="expression patterns" value="Group enriched (lymphoid tissue, skeletal muscle)"/>
</dbReference>
<dbReference type="MalaCards" id="SATB1"/>
<dbReference type="MIM" id="602075">
    <property type="type" value="gene"/>
</dbReference>
<dbReference type="MIM" id="619228">
    <property type="type" value="phenotype"/>
</dbReference>
<dbReference type="MIM" id="619229">
    <property type="type" value="phenotype"/>
</dbReference>
<dbReference type="neXtProt" id="NX_Q01826"/>
<dbReference type="OpenTargets" id="ENSG00000182568"/>
<dbReference type="Orphanet" id="684232">
    <property type="disease" value="Intellectual disability-epilepsy-dental anomalies-facial dysmorphism syndrome"/>
</dbReference>
<dbReference type="PharmGKB" id="PA34951"/>
<dbReference type="VEuPathDB" id="HostDB:ENSG00000182568"/>
<dbReference type="eggNOG" id="KOG3755">
    <property type="taxonomic scope" value="Eukaryota"/>
</dbReference>
<dbReference type="GeneTree" id="ENSGT00390000008096"/>
<dbReference type="HOGENOM" id="CLU_012559_1_0_1"/>
<dbReference type="InParanoid" id="Q01826"/>
<dbReference type="OMA" id="SGHLMKS"/>
<dbReference type="OrthoDB" id="10052721at2759"/>
<dbReference type="PAN-GO" id="Q01826">
    <property type="GO annotations" value="4 GO annotations based on evolutionary models"/>
</dbReference>
<dbReference type="PhylomeDB" id="Q01826"/>
<dbReference type="TreeFam" id="TF332714"/>
<dbReference type="PathwayCommons" id="Q01826"/>
<dbReference type="Reactome" id="R-HSA-111465">
    <property type="pathway name" value="Apoptotic cleavage of cellular proteins"/>
</dbReference>
<dbReference type="Reactome" id="R-HSA-4551638">
    <property type="pathway name" value="SUMOylation of chromatin organization proteins"/>
</dbReference>
<dbReference type="SignaLink" id="Q01826"/>
<dbReference type="SIGNOR" id="Q01826"/>
<dbReference type="BioGRID-ORCS" id="6304">
    <property type="hits" value="18 hits in 1170 CRISPR screens"/>
</dbReference>
<dbReference type="CD-CODE" id="B5B9A610">
    <property type="entry name" value="PML body"/>
</dbReference>
<dbReference type="ChiTaRS" id="SATB1">
    <property type="organism name" value="human"/>
</dbReference>
<dbReference type="EvolutionaryTrace" id="Q01826"/>
<dbReference type="GeneWiki" id="SATB1"/>
<dbReference type="GenomeRNAi" id="6304"/>
<dbReference type="Pharos" id="Q01826">
    <property type="development level" value="Tbio"/>
</dbReference>
<dbReference type="PRO" id="PR:Q01826"/>
<dbReference type="Proteomes" id="UP000005640">
    <property type="component" value="Chromosome 3"/>
</dbReference>
<dbReference type="RNAct" id="Q01826">
    <property type="molecule type" value="protein"/>
</dbReference>
<dbReference type="Bgee" id="ENSG00000182568">
    <property type="expression patterns" value="Expressed in orbitofrontal cortex and 220 other cell types or tissues"/>
</dbReference>
<dbReference type="ExpressionAtlas" id="Q01826">
    <property type="expression patterns" value="baseline and differential"/>
</dbReference>
<dbReference type="GO" id="GO:0000785">
    <property type="term" value="C:chromatin"/>
    <property type="evidence" value="ECO:0000247"/>
    <property type="project" value="NTNU_SB"/>
</dbReference>
<dbReference type="GO" id="GO:0016604">
    <property type="term" value="C:nuclear body"/>
    <property type="evidence" value="ECO:0000314"/>
    <property type="project" value="HPA"/>
</dbReference>
<dbReference type="GO" id="GO:0016363">
    <property type="term" value="C:nuclear matrix"/>
    <property type="evidence" value="ECO:0007669"/>
    <property type="project" value="UniProtKB-SubCell"/>
</dbReference>
<dbReference type="GO" id="GO:0005654">
    <property type="term" value="C:nucleoplasm"/>
    <property type="evidence" value="ECO:0000314"/>
    <property type="project" value="HPA"/>
</dbReference>
<dbReference type="GO" id="GO:0005634">
    <property type="term" value="C:nucleus"/>
    <property type="evidence" value="ECO:0000314"/>
    <property type="project" value="UniProtKB"/>
</dbReference>
<dbReference type="GO" id="GO:0016605">
    <property type="term" value="C:PML body"/>
    <property type="evidence" value="ECO:0000314"/>
    <property type="project" value="UniProtKB"/>
</dbReference>
<dbReference type="GO" id="GO:0000981">
    <property type="term" value="F:DNA-binding transcription factor activity, RNA polymerase II-specific"/>
    <property type="evidence" value="ECO:0000247"/>
    <property type="project" value="NTNU_SB"/>
</dbReference>
<dbReference type="GO" id="GO:0001227">
    <property type="term" value="F:DNA-binding transcription repressor activity, RNA polymerase II-specific"/>
    <property type="evidence" value="ECO:0000314"/>
    <property type="project" value="NTNU_SB"/>
</dbReference>
<dbReference type="GO" id="GO:0003690">
    <property type="term" value="F:double-stranded DNA binding"/>
    <property type="evidence" value="ECO:0000304"/>
    <property type="project" value="ProtInc"/>
</dbReference>
<dbReference type="GO" id="GO:0000978">
    <property type="term" value="F:RNA polymerase II cis-regulatory region sequence-specific DNA binding"/>
    <property type="evidence" value="ECO:0000318"/>
    <property type="project" value="GO_Central"/>
</dbReference>
<dbReference type="GO" id="GO:0000977">
    <property type="term" value="F:RNA polymerase II transcription regulatory region sequence-specific DNA binding"/>
    <property type="evidence" value="ECO:0000314"/>
    <property type="project" value="NTNU_SB"/>
</dbReference>
<dbReference type="GO" id="GO:0043565">
    <property type="term" value="F:sequence-specific DNA binding"/>
    <property type="evidence" value="ECO:0000314"/>
    <property type="project" value="NTNU_SB"/>
</dbReference>
<dbReference type="GO" id="GO:0006325">
    <property type="term" value="P:chromatin organization"/>
    <property type="evidence" value="ECO:0000304"/>
    <property type="project" value="ProtInc"/>
</dbReference>
<dbReference type="GO" id="GO:0006338">
    <property type="term" value="P:chromatin remodeling"/>
    <property type="evidence" value="ECO:0000318"/>
    <property type="project" value="GO_Central"/>
</dbReference>
<dbReference type="GO" id="GO:0000122">
    <property type="term" value="P:negative regulation of transcription by RNA polymerase II"/>
    <property type="evidence" value="ECO:0000314"/>
    <property type="project" value="UniProtKB"/>
</dbReference>
<dbReference type="GO" id="GO:0006357">
    <property type="term" value="P:regulation of transcription by RNA polymerase II"/>
    <property type="evidence" value="ECO:0000318"/>
    <property type="project" value="GO_Central"/>
</dbReference>
<dbReference type="CDD" id="cd00086">
    <property type="entry name" value="homeodomain"/>
    <property type="match status" value="1"/>
</dbReference>
<dbReference type="CDD" id="cd11585">
    <property type="entry name" value="SATB1_N"/>
    <property type="match status" value="1"/>
</dbReference>
<dbReference type="FunFam" id="1.10.10.60:FF:000070">
    <property type="entry name" value="DNA-binding protein SATB"/>
    <property type="match status" value="1"/>
</dbReference>
<dbReference type="FunFam" id="1.10.260.40:FF:000003">
    <property type="entry name" value="DNA-binding protein SATB"/>
    <property type="match status" value="2"/>
</dbReference>
<dbReference type="FunFam" id="1.10.260.70:FF:000001">
    <property type="entry name" value="DNA-binding protein SATB"/>
    <property type="match status" value="1"/>
</dbReference>
<dbReference type="FunFam" id="3.10.20.710:FF:000001">
    <property type="entry name" value="DNA-binding protein SATB"/>
    <property type="match status" value="1"/>
</dbReference>
<dbReference type="Gene3D" id="1.10.10.60">
    <property type="entry name" value="Homeodomain-like"/>
    <property type="match status" value="1"/>
</dbReference>
<dbReference type="Gene3D" id="1.10.260.40">
    <property type="entry name" value="lambda repressor-like DNA-binding domains"/>
    <property type="match status" value="2"/>
</dbReference>
<dbReference type="Gene3D" id="1.10.260.70">
    <property type="entry name" value="SATB, CULT domain"/>
    <property type="match status" value="1"/>
</dbReference>
<dbReference type="Gene3D" id="3.10.20.710">
    <property type="entry name" value="SATB, ubiquitin-like oligomerisation domain"/>
    <property type="match status" value="1"/>
</dbReference>
<dbReference type="InterPro" id="IPR003350">
    <property type="entry name" value="CUT_dom"/>
</dbReference>
<dbReference type="InterPro" id="IPR032355">
    <property type="entry name" value="CUTL"/>
</dbReference>
<dbReference type="InterPro" id="IPR001356">
    <property type="entry name" value="HD"/>
</dbReference>
<dbReference type="InterPro" id="IPR009057">
    <property type="entry name" value="Homeodomain-like_sf"/>
</dbReference>
<dbReference type="InterPro" id="IPR010982">
    <property type="entry name" value="Lambda_DNA-bd_dom_sf"/>
</dbReference>
<dbReference type="InterPro" id="IPR039673">
    <property type="entry name" value="SATB1/SATB2"/>
</dbReference>
<dbReference type="InterPro" id="IPR038216">
    <property type="entry name" value="SATB_CUTL_sf"/>
</dbReference>
<dbReference type="InterPro" id="IPR038224">
    <property type="entry name" value="SATB_ULD_sf"/>
</dbReference>
<dbReference type="InterPro" id="IPR032392">
    <property type="entry name" value="ULD"/>
</dbReference>
<dbReference type="PANTHER" id="PTHR15116">
    <property type="entry name" value="DNA-BINDING PROTEIN SATB FAMILY MEMBER"/>
    <property type="match status" value="1"/>
</dbReference>
<dbReference type="PANTHER" id="PTHR15116:SF14">
    <property type="entry name" value="DNA-BINDING PROTEIN SATB1"/>
    <property type="match status" value="1"/>
</dbReference>
<dbReference type="Pfam" id="PF02376">
    <property type="entry name" value="CUT"/>
    <property type="match status" value="2"/>
</dbReference>
<dbReference type="Pfam" id="PF16557">
    <property type="entry name" value="CUTL"/>
    <property type="match status" value="1"/>
</dbReference>
<dbReference type="Pfam" id="PF00046">
    <property type="entry name" value="Homeodomain"/>
    <property type="match status" value="1"/>
</dbReference>
<dbReference type="Pfam" id="PF16534">
    <property type="entry name" value="ULD"/>
    <property type="match status" value="1"/>
</dbReference>
<dbReference type="SMART" id="SM01109">
    <property type="entry name" value="CUT"/>
    <property type="match status" value="2"/>
</dbReference>
<dbReference type="SMART" id="SM00389">
    <property type="entry name" value="HOX"/>
    <property type="match status" value="1"/>
</dbReference>
<dbReference type="SUPFAM" id="SSF46689">
    <property type="entry name" value="Homeodomain-like"/>
    <property type="match status" value="1"/>
</dbReference>
<dbReference type="SUPFAM" id="SSF47413">
    <property type="entry name" value="lambda repressor-like DNA-binding domains"/>
    <property type="match status" value="2"/>
</dbReference>
<dbReference type="PROSITE" id="PS51982">
    <property type="entry name" value="CMP"/>
    <property type="match status" value="1"/>
</dbReference>
<dbReference type="PROSITE" id="PS51042">
    <property type="entry name" value="CUT"/>
    <property type="match status" value="2"/>
</dbReference>
<dbReference type="PROSITE" id="PS51983">
    <property type="entry name" value="CUTL"/>
    <property type="match status" value="1"/>
</dbReference>
<dbReference type="PROSITE" id="PS50071">
    <property type="entry name" value="HOMEOBOX_2"/>
    <property type="match status" value="1"/>
</dbReference>
<gene>
    <name evidence="40" type="primary">SATB1</name>
</gene>
<feature type="chain" id="PRO_0000202398" description="DNA-binding protein SATB1">
    <location>
        <begin position="1"/>
        <end position="763"/>
    </location>
</feature>
<feature type="domain" description="CMP" evidence="5">
    <location>
        <begin position="71"/>
        <end position="172"/>
    </location>
</feature>
<feature type="domain" description="CUTL" evidence="6">
    <location>
        <begin position="175"/>
        <end position="248"/>
    </location>
</feature>
<feature type="DNA-binding region" description="CUT 1" evidence="4">
    <location>
        <begin position="361"/>
        <end position="448"/>
    </location>
</feature>
<feature type="DNA-binding region" description="CUT 2" evidence="4">
    <location>
        <begin position="484"/>
        <end position="571"/>
    </location>
</feature>
<feature type="DNA-binding region" description="Homeobox" evidence="3">
    <location>
        <begin position="645"/>
        <end position="704"/>
    </location>
</feature>
<feature type="region of interest" description="Disordered" evidence="7">
    <location>
        <begin position="1"/>
        <end position="54"/>
    </location>
</feature>
<feature type="region of interest" description="Nuclear matrix targeting sequence (NMTS)">
    <location>
        <begin position="224"/>
        <end position="278"/>
    </location>
</feature>
<feature type="region of interest" description="Disordered" evidence="7">
    <location>
        <begin position="266"/>
        <end position="307"/>
    </location>
</feature>
<feature type="region of interest" description="Disordered" evidence="7">
    <location>
        <begin position="591"/>
        <end position="649"/>
    </location>
</feature>
<feature type="short sequence motif" description="Nuclear localization signal" evidence="19">
    <location>
        <begin position="20"/>
        <end position="40"/>
    </location>
</feature>
<feature type="short sequence motif" description="Protein interaction">
    <location>
        <begin position="139"/>
        <end position="143"/>
    </location>
</feature>
<feature type="compositionally biased region" description="Basic and acidic residues" evidence="7">
    <location>
        <begin position="1"/>
        <end position="15"/>
    </location>
</feature>
<feature type="compositionally biased region" description="Polar residues" evidence="7">
    <location>
        <begin position="266"/>
        <end position="296"/>
    </location>
</feature>
<feature type="compositionally biased region" description="Low complexity" evidence="7">
    <location>
        <begin position="591"/>
        <end position="607"/>
    </location>
</feature>
<feature type="binding site">
    <location>
        <position position="390"/>
    </location>
    <ligand>
        <name>DNA</name>
        <dbReference type="ChEBI" id="CHEBI:16991"/>
    </ligand>
    <ligandPart>
        <name>matrix attachment region (MAR) of DNA</name>
    </ligandPart>
</feature>
<feature type="binding site">
    <location>
        <begin position="400"/>
        <end position="410"/>
    </location>
    <ligand>
        <name>DNA</name>
        <dbReference type="ChEBI" id="CHEBI:16991"/>
    </ligand>
    <ligandPart>
        <name>matrix attachment region (MAR) of DNA</name>
    </ligandPart>
</feature>
<feature type="binding site">
    <location>
        <position position="425"/>
    </location>
    <ligand>
        <name>DNA</name>
        <dbReference type="ChEBI" id="CHEBI:16991"/>
    </ligand>
    <ligandPart>
        <name>matrix attachment region (MAR) of DNA</name>
    </ligandPart>
</feature>
<feature type="site" description="Cleavage; by caspases">
    <location>
        <begin position="254"/>
        <end position="255"/>
    </location>
</feature>
<feature type="modified residue" description="N6-acetyllysine" evidence="23">
    <location>
        <position position="136"/>
    </location>
</feature>
<feature type="modified residue" description="Phosphoserine" evidence="23">
    <location>
        <position position="185"/>
    </location>
</feature>
<feature type="modified residue" description="Phosphoserine" evidence="2">
    <location>
        <position position="637"/>
    </location>
</feature>
<feature type="cross-link" description="Glycyl lysine isopeptide (Lys-Gly) (interchain with G-Cter in SUMO2)" evidence="41">
    <location>
        <position position="51"/>
    </location>
</feature>
<feature type="cross-link" description="Glycyl lysine isopeptide (Lys-Gly) (interchain with G-Cter in SUMO)" evidence="30">
    <location>
        <position position="744"/>
    </location>
</feature>
<feature type="splice variant" id="VSP_038296" description="In isoform 2." evidence="38">
    <original>I</original>
    <variation>IQSPSPTTLGKGESRGVFLPGLPTPAPWLGAAP</variation>
    <location>
        <position position="592"/>
    </location>
</feature>
<feature type="sequence variant" id="VAR_085437" description="In DHDBV; uncertain significance." evidence="35">
    <original>P</original>
    <variation>L</variation>
    <location>
        <position position="181"/>
    </location>
</feature>
<feature type="sequence variant" id="VAR_085438" description="In DHDBV." evidence="35">
    <original>M</original>
    <variation>V</variation>
    <location>
        <position position="323"/>
    </location>
</feature>
<feature type="sequence variant" id="VAR_085439" description="No effect on DNA-binding or transcriptional repression." evidence="35">
    <original>S</original>
    <variation>L</variation>
    <location>
        <position position="366"/>
    </location>
</feature>
<feature type="sequence variant" id="VAR_085440" description="In DHDBV." evidence="35">
    <original>Q</original>
    <variation>R</variation>
    <location>
        <position position="402"/>
    </location>
</feature>
<feature type="sequence variant" id="VAR_085441" description="In DHDBV; stabilized DNA-binding and increased transcriptional repression." evidence="35">
    <original>E</original>
    <variation>G</variation>
    <location>
        <position position="407"/>
    </location>
</feature>
<feature type="sequence variant" id="VAR_085442" description="In DHDBV." evidence="35">
    <original>E</original>
    <variation>Q</variation>
    <location>
        <position position="407"/>
    </location>
</feature>
<feature type="sequence variant" id="VAR_085443" description="In DEFDA; reduced transcriptional repression." evidence="35">
    <location>
        <begin position="410"/>
        <end position="763"/>
    </location>
</feature>
<feature type="sequence variant" id="VAR_085444" description="In DHDBV." evidence="35">
    <original>E</original>
    <variation>K</variation>
    <location>
        <position position="413"/>
    </location>
</feature>
<feature type="sequence variant" id="VAR_085445" description="In DHDBV; stabilized DNA-binding and increased transcriptional repression." evidence="35">
    <original>Q</original>
    <variation>R</variation>
    <location>
        <position position="420"/>
    </location>
</feature>
<feature type="sequence variant" id="VAR_085446" description="No effect on DNA-binding or transcriptional repression." evidence="35">
    <original>V</original>
    <variation>L</variation>
    <location>
        <position position="519"/>
    </location>
</feature>
<feature type="sequence variant" id="VAR_085447" description="In DHDBV." evidence="35">
    <original>Q</original>
    <variation>R</variation>
    <location>
        <position position="525"/>
    </location>
</feature>
<feature type="sequence variant" id="VAR_085448" description="In DHDBV." evidence="35">
    <original>E</original>
    <variation>G</variation>
    <location>
        <position position="530"/>
    </location>
</feature>
<feature type="sequence variant" id="VAR_085449" description="In DHDBV; stabilized DNA-binding and increased transcriptional repression." evidence="35">
    <original>E</original>
    <variation>K</variation>
    <location>
        <position position="530"/>
    </location>
</feature>
<feature type="sequence variant" id="VAR_085450" description="In DHDBV; stabilized DNA-binding and increased transcriptional repression." evidence="35">
    <original>E</original>
    <variation>Q</variation>
    <location>
        <position position="530"/>
    </location>
</feature>
<feature type="sequence variant" id="VAR_085451" description="In DHDBV; stabilized DNA-binding and increased transcriptional repression." evidence="35">
    <original>E</original>
    <variation>K</variation>
    <location>
        <position position="547"/>
    </location>
</feature>
<feature type="sequence variant" id="VAR_085452" description="No effect on DNA-binding or transcriptional repression." evidence="35">
    <original>A</original>
    <variation>T</variation>
    <location>
        <position position="573"/>
    </location>
</feature>
<feature type="sequence variant" id="VAR_085453" description="In DHDBV." evidence="35">
    <original>H</original>
    <variation>R</variation>
    <location>
        <position position="577"/>
    </location>
</feature>
<feature type="sequence variant" id="VAR_085454" description="In DHDBV; uncertain significance." evidence="35">
    <original>Q</original>
    <variation>R</variation>
    <location>
        <position position="619"/>
    </location>
</feature>
<feature type="sequence variant" id="VAR_085455" description="In DHDBV; uncertain significance; no effect on DNA-binding or transcriptional repression." evidence="35">
    <original>L</original>
    <variation>V</variation>
    <location>
        <position position="682"/>
    </location>
</feature>
<feature type="sequence variant" id="VAR_085456" description="In DEFDA; altered subcellular localization forming nuclear puncta; reduced transcriptional repression of some target genes." evidence="35">
    <location>
        <begin position="694"/>
        <end position="763"/>
    </location>
</feature>
<feature type="mutagenesis site" description="Loss of nuclear localization, cytoplasmic." evidence="19">
    <original>K</original>
    <variation>A</variation>
    <location>
        <position position="29"/>
    </location>
</feature>
<feature type="mutagenesis site" description="Loss of nuclear localization, cytoplasmic." evidence="19">
    <original>R</original>
    <variation>A</variation>
    <location>
        <position position="32"/>
    </location>
</feature>
<feature type="mutagenesis site" description="Normal nuclear localization." evidence="19">
    <original>E</original>
    <variation>A</variation>
    <location>
        <position position="34"/>
    </location>
</feature>
<feature type="mutagenesis site" description="Normal nuclear localization." evidence="19">
    <original>N</original>
    <variation>A</variation>
    <location>
        <position position="36"/>
    </location>
</feature>
<feature type="mutagenesis site" description="No acetylation." evidence="23 31">
    <original>K</original>
    <variation>A</variation>
    <variation>Q</variation>
    <variation>R</variation>
    <location>
        <position position="136"/>
    </location>
</feature>
<feature type="mutagenesis site" description="No phosphorylation." evidence="23">
    <original>S</original>
    <variation>A</variation>
    <location>
        <position position="185"/>
    </location>
</feature>
<feature type="mutagenesis site" description="CASP6-resistant." evidence="10">
    <original>D</original>
    <variation>A</variation>
    <location>
        <position position="254"/>
    </location>
</feature>
<feature type="mutagenesis site" description="Slightly reduced MAR-DNA-binding." evidence="21">
    <original>S</original>
    <variation>A</variation>
    <location>
        <position position="373"/>
    </location>
</feature>
<feature type="mutagenesis site" description="Reduced MAR-DNA-binding." evidence="21">
    <original>R</original>
    <variation>N</variation>
    <location>
        <position position="380"/>
    </location>
</feature>
<feature type="mutagenesis site" description="Impaired MAR-DNA-binding." evidence="21">
    <original>K</original>
    <variation>N</variation>
    <location>
        <position position="384"/>
    </location>
</feature>
<feature type="mutagenesis site" description="Reduced MAR-DNA-binding." evidence="21">
    <original>R</original>
    <variation>N</variation>
    <location>
        <position position="395"/>
    </location>
</feature>
<feature type="mutagenesis site" description="Impaired MAR-DNA-binding." evidence="27">
    <original>Q</original>
    <variation>A</variation>
    <location>
        <position position="402"/>
    </location>
</feature>
<feature type="mutagenesis site" description="Impaired MAR-DNA-binding." evidence="27">
    <original>G</original>
    <variation>A</variation>
    <location>
        <position position="403"/>
    </location>
</feature>
<feature type="mutagenesis site" description="Impaired MAR-DNA-binding." evidence="21">
    <original>S</original>
    <variation>A</variation>
    <location>
        <position position="406"/>
    </location>
</feature>
<feature type="mutagenesis site" description="Impaired MAR-DNA-binding." evidence="21">
    <original>R</original>
    <variation>N</variation>
    <location>
        <position position="410"/>
    </location>
</feature>
<feature type="mutagenesis site" description="Normal sumoylation." evidence="30">
    <original>K</original>
    <variation>R</variation>
    <location>
        <position position="411"/>
    </location>
</feature>
<feature type="mutagenesis site" description="Impaired MAR-DNA-binding." evidence="21">
    <original>K</original>
    <variation>N</variation>
    <location>
        <position position="416"/>
    </location>
</feature>
<feature type="mutagenesis site" description="Reduced MAR-DNA-binding." evidence="21">
    <original>R</original>
    <variation>N</variation>
    <location>
        <position position="427"/>
    </location>
</feature>
<feature type="mutagenesis site" description="Reduced MAR-DNA-binding." evidence="21">
    <original>R</original>
    <variation>N</variation>
    <location>
        <position position="442"/>
    </location>
</feature>
<feature type="mutagenesis site" description="Slightly reduced MAR-DNA-binding." evidence="21">
    <original>S</original>
    <variation>A</variation>
    <location>
        <position position="451"/>
    </location>
</feature>
<feature type="mutagenesis site" description="Reduced MAR-DNA-binding." evidence="21">
    <original>K</original>
    <variation>N</variation>
    <location>
        <position position="475"/>
    </location>
</feature>
<feature type="mutagenesis site" description="Normal sumoylation." evidence="30">
    <original>K</original>
    <variation>R</variation>
    <location>
        <position position="486"/>
    </location>
</feature>
<feature type="mutagenesis site" description="Reduced interaction with matrix attachment region (MAR) DNA; when associated with A-648." evidence="36">
    <original>R</original>
    <variation>A</variation>
    <location>
        <position position="646"/>
    </location>
</feature>
<feature type="mutagenesis site" description="Reduced interaction with matrix attachment region (MAR) DNA; when associated with A-646." evidence="36">
    <original>R</original>
    <variation>A</variation>
    <location>
        <position position="648"/>
    </location>
</feature>
<feature type="mutagenesis site" description="Reduced interaction with matrix attachment region (MAR) DNA." evidence="36">
    <original>FQN</original>
    <variation>AAA</variation>
    <location>
        <begin position="693"/>
        <end position="695"/>
    </location>
</feature>
<feature type="mutagenesis site" description="Normal sumoylation." evidence="30">
    <original>K</original>
    <variation>R</variation>
    <location>
        <position position="720"/>
    </location>
</feature>
<feature type="mutagenesis site" description="Loss of sumoylation." evidence="30">
    <original>K</original>
    <variation>R</variation>
    <location>
        <position position="744"/>
    </location>
</feature>
<feature type="strand" evidence="46">
    <location>
        <begin position="72"/>
        <end position="83"/>
    </location>
</feature>
<feature type="strand" evidence="46">
    <location>
        <begin position="92"/>
        <end position="102"/>
    </location>
</feature>
<feature type="helix" evidence="46">
    <location>
        <begin position="107"/>
        <end position="109"/>
    </location>
</feature>
<feature type="helix" evidence="46">
    <location>
        <begin position="110"/>
        <end position="117"/>
    </location>
</feature>
<feature type="helix" evidence="46">
    <location>
        <begin position="122"/>
        <end position="127"/>
    </location>
</feature>
<feature type="strand" evidence="46">
    <location>
        <begin position="129"/>
        <end position="134"/>
    </location>
</feature>
<feature type="helix" evidence="46">
    <location>
        <begin position="142"/>
        <end position="144"/>
    </location>
</feature>
<feature type="helix" evidence="46">
    <location>
        <begin position="153"/>
        <end position="157"/>
    </location>
</feature>
<feature type="turn" evidence="46">
    <location>
        <begin position="158"/>
        <end position="163"/>
    </location>
</feature>
<feature type="strand" evidence="46">
    <location>
        <begin position="164"/>
        <end position="169"/>
    </location>
</feature>
<feature type="helix" evidence="45">
    <location>
        <begin position="181"/>
        <end position="183"/>
    </location>
</feature>
<feature type="helix" evidence="45">
    <location>
        <begin position="186"/>
        <end position="196"/>
    </location>
</feature>
<feature type="turn" evidence="45">
    <location>
        <begin position="197"/>
        <end position="199"/>
    </location>
</feature>
<feature type="helix" evidence="45">
    <location>
        <begin position="202"/>
        <end position="208"/>
    </location>
</feature>
<feature type="strand" evidence="45">
    <location>
        <begin position="209"/>
        <end position="211"/>
    </location>
</feature>
<feature type="helix" evidence="45">
    <location>
        <begin position="213"/>
        <end position="221"/>
    </location>
</feature>
<feature type="helix" evidence="45">
    <location>
        <begin position="230"/>
        <end position="245"/>
    </location>
</feature>
<feature type="helix" evidence="44">
    <location>
        <begin position="375"/>
        <end position="386"/>
    </location>
</feature>
<feature type="helix" evidence="44">
    <location>
        <begin position="390"/>
        <end position="398"/>
    </location>
</feature>
<feature type="helix" evidence="44">
    <location>
        <begin position="402"/>
        <end position="411"/>
    </location>
</feature>
<feature type="helix" evidence="43">
    <location>
        <begin position="415"/>
        <end position="417"/>
    </location>
</feature>
<feature type="helix" evidence="44">
    <location>
        <begin position="420"/>
        <end position="433"/>
    </location>
</feature>
<feature type="helix" evidence="44">
    <location>
        <begin position="437"/>
        <end position="452"/>
    </location>
</feature>
<feature type="helix" evidence="42">
    <location>
        <begin position="653"/>
        <end position="665"/>
    </location>
</feature>
<feature type="helix" evidence="42">
    <location>
        <begin position="672"/>
        <end position="681"/>
    </location>
</feature>
<feature type="helix" evidence="42">
    <location>
        <begin position="687"/>
        <end position="702"/>
    </location>
</feature>
<sequence>MDHLNEATQGKEHSEMSNNVSDPKGPPAKIARLEQNGSPLGRGRLGSTGAKMQGVPLKHSGHLMKTNLRKGTMLPVFCVVEHYENAIEYDCKEEHAEFVLVRKDMLFNQLIEMALLSLGYSHSSAAQAKGLIQVGKWNPVPLSYVTDAPDATVADMLQDVYHVVTLKIQLHSCPKLEDLPPEQWSHTTVRNALKDLLKDMNQSSLAKECPLSQSMISSIVNSTYYANVSAAKCQEFGRWYKHFKKTKDMMVEMDSLSELSQQGANHVNFGQQPVPGNTAEQPPSPAQLSHGSQPSVRTPLPNLHPGLVSTPISPQLVNQQLVMAQLLNQQYAVNRLLAQQSLNQQYLNHPPPVSRSMNKPLEQQVSTNTEVSSEIYQWVRDELKRAGISQAVFARVAFNRTQGLLSEILRKEEDPKTASQSLLVNLRAMQNFLQLPEAERDRIYQDERERSLNAASAMGPAPLISTPPSRPPQVKTATIATERNGKPENNTMNINASIYDEIQQEMKRAKVSQALFAKVAATKSQGWLCELLRWKEDPSPENRTLWENLSMIRRFLSLPQPERDAIYEQESNAVHHHGDRPPHIIHVPAEQIQQQQQQQQQQQQQQQAPPPPQPQQQPQTGPRLPPRQPTVASPAESDEENRQKTRPRTKISVEALGILQSFIQDVGLYPDEEAIQTLSAQLDLPKYTIIKFFQNQRYYLKHHGKLKDNSGLEVDVAEYKEEELLKDLEESVQDKNTNTLFSVKLEEELSVEGNTDINTDLKD</sequence>
<evidence type="ECO:0000250" key="1"/>
<evidence type="ECO:0000250" key="2">
    <source>
        <dbReference type="UniProtKB" id="Q60611"/>
    </source>
</evidence>
<evidence type="ECO:0000255" key="3">
    <source>
        <dbReference type="PROSITE-ProRule" id="PRU00108"/>
    </source>
</evidence>
<evidence type="ECO:0000255" key="4">
    <source>
        <dbReference type="PROSITE-ProRule" id="PRU00374"/>
    </source>
</evidence>
<evidence type="ECO:0000255" key="5">
    <source>
        <dbReference type="PROSITE-ProRule" id="PRU01326"/>
    </source>
</evidence>
<evidence type="ECO:0000255" key="6">
    <source>
        <dbReference type="PROSITE-ProRule" id="PRU01327"/>
    </source>
</evidence>
<evidence type="ECO:0000256" key="7">
    <source>
        <dbReference type="SAM" id="MobiDB-lite"/>
    </source>
</evidence>
<evidence type="ECO:0000269" key="8">
    <source>
    </source>
</evidence>
<evidence type="ECO:0000269" key="9">
    <source>
    </source>
</evidence>
<evidence type="ECO:0000269" key="10">
    <source>
    </source>
</evidence>
<evidence type="ECO:0000269" key="11">
    <source>
    </source>
</evidence>
<evidence type="ECO:0000269" key="12">
    <source>
    </source>
</evidence>
<evidence type="ECO:0000269" key="13">
    <source>
    </source>
</evidence>
<evidence type="ECO:0000269" key="14">
    <source>
    </source>
</evidence>
<evidence type="ECO:0000269" key="15">
    <source>
    </source>
</evidence>
<evidence type="ECO:0000269" key="16">
    <source>
    </source>
</evidence>
<evidence type="ECO:0000269" key="17">
    <source>
    </source>
</evidence>
<evidence type="ECO:0000269" key="18">
    <source>
    </source>
</evidence>
<evidence type="ECO:0000269" key="19">
    <source>
    </source>
</evidence>
<evidence type="ECO:0000269" key="20">
    <source>
    </source>
</evidence>
<evidence type="ECO:0000269" key="21">
    <source>
    </source>
</evidence>
<evidence type="ECO:0000269" key="22">
    <source>
    </source>
</evidence>
<evidence type="ECO:0000269" key="23">
    <source>
    </source>
</evidence>
<evidence type="ECO:0000269" key="24">
    <source>
    </source>
</evidence>
<evidence type="ECO:0000269" key="25">
    <source>
    </source>
</evidence>
<evidence type="ECO:0000269" key="26">
    <source>
    </source>
</evidence>
<evidence type="ECO:0000269" key="27">
    <source>
    </source>
</evidence>
<evidence type="ECO:0000269" key="28">
    <source>
    </source>
</evidence>
<evidence type="ECO:0000269" key="29">
    <source>
    </source>
</evidence>
<evidence type="ECO:0000269" key="30">
    <source>
    </source>
</evidence>
<evidence type="ECO:0000269" key="31">
    <source>
    </source>
</evidence>
<evidence type="ECO:0000269" key="32">
    <source>
    </source>
</evidence>
<evidence type="ECO:0000269" key="33">
    <source>
    </source>
</evidence>
<evidence type="ECO:0000269" key="34">
    <source>
    </source>
</evidence>
<evidence type="ECO:0000269" key="35">
    <source>
    </source>
</evidence>
<evidence type="ECO:0000269" key="36">
    <source>
    </source>
</evidence>
<evidence type="ECO:0000269" key="37">
    <source>
    </source>
</evidence>
<evidence type="ECO:0000303" key="38">
    <source ref="3"/>
</evidence>
<evidence type="ECO:0000305" key="39"/>
<evidence type="ECO:0000312" key="40">
    <source>
        <dbReference type="HGNC" id="HGNC:10541"/>
    </source>
</evidence>
<evidence type="ECO:0007744" key="41">
    <source>
    </source>
</evidence>
<evidence type="ECO:0007829" key="42">
    <source>
        <dbReference type="PDB" id="2MW8"/>
    </source>
</evidence>
<evidence type="ECO:0007829" key="43">
    <source>
        <dbReference type="PDB" id="2O49"/>
    </source>
</evidence>
<evidence type="ECO:0007829" key="44">
    <source>
        <dbReference type="PDB" id="2O4A"/>
    </source>
</evidence>
<evidence type="ECO:0007829" key="45">
    <source>
        <dbReference type="PDB" id="3NZL"/>
    </source>
</evidence>
<evidence type="ECO:0007829" key="46">
    <source>
        <dbReference type="PDB" id="3TUO"/>
    </source>
</evidence>
<reference key="1">
    <citation type="journal article" date="1992" name="Cell">
        <title>A tissue-specific MAR/SAR DNA-binding protein with unusual binding site recognition.</title>
        <authorList>
            <person name="Dickinson L.A."/>
            <person name="Joh T."/>
            <person name="Kohwi Y."/>
            <person name="Kohwi-Shigematsu T."/>
        </authorList>
    </citation>
    <scope>NUCLEOTIDE SEQUENCE [MRNA] (ISOFORM 1)</scope>
    <scope>FUNCTION</scope>
    <scope>SUBCELLULAR LOCATION</scope>
    <scope>TISSUE SPECIFICITY</scope>
</reference>
<reference key="2">
    <citation type="journal article" date="2004" name="Nat. Genet.">
        <title>Complete sequencing and characterization of 21,243 full-length human cDNAs.</title>
        <authorList>
            <person name="Ota T."/>
            <person name="Suzuki Y."/>
            <person name="Nishikawa T."/>
            <person name="Otsuki T."/>
            <person name="Sugiyama T."/>
            <person name="Irie R."/>
            <person name="Wakamatsu A."/>
            <person name="Hayashi K."/>
            <person name="Sato H."/>
            <person name="Nagai K."/>
            <person name="Kimura K."/>
            <person name="Makita H."/>
            <person name="Sekine M."/>
            <person name="Obayashi M."/>
            <person name="Nishi T."/>
            <person name="Shibahara T."/>
            <person name="Tanaka T."/>
            <person name="Ishii S."/>
            <person name="Yamamoto J."/>
            <person name="Saito K."/>
            <person name="Kawai Y."/>
            <person name="Isono Y."/>
            <person name="Nakamura Y."/>
            <person name="Nagahari K."/>
            <person name="Murakami K."/>
            <person name="Yasuda T."/>
            <person name="Iwayanagi T."/>
            <person name="Wagatsuma M."/>
            <person name="Shiratori A."/>
            <person name="Sudo H."/>
            <person name="Hosoiri T."/>
            <person name="Kaku Y."/>
            <person name="Kodaira H."/>
            <person name="Kondo H."/>
            <person name="Sugawara M."/>
            <person name="Takahashi M."/>
            <person name="Kanda K."/>
            <person name="Yokoi T."/>
            <person name="Furuya T."/>
            <person name="Kikkawa E."/>
            <person name="Omura Y."/>
            <person name="Abe K."/>
            <person name="Kamihara K."/>
            <person name="Katsuta N."/>
            <person name="Sato K."/>
            <person name="Tanikawa M."/>
            <person name="Yamazaki M."/>
            <person name="Ninomiya K."/>
            <person name="Ishibashi T."/>
            <person name="Yamashita H."/>
            <person name="Murakawa K."/>
            <person name="Fujimori K."/>
            <person name="Tanai H."/>
            <person name="Kimata M."/>
            <person name="Watanabe M."/>
            <person name="Hiraoka S."/>
            <person name="Chiba Y."/>
            <person name="Ishida S."/>
            <person name="Ono Y."/>
            <person name="Takiguchi S."/>
            <person name="Watanabe S."/>
            <person name="Yosida M."/>
            <person name="Hotuta T."/>
            <person name="Kusano J."/>
            <person name="Kanehori K."/>
            <person name="Takahashi-Fujii A."/>
            <person name="Hara H."/>
            <person name="Tanase T.-O."/>
            <person name="Nomura Y."/>
            <person name="Togiya S."/>
            <person name="Komai F."/>
            <person name="Hara R."/>
            <person name="Takeuchi K."/>
            <person name="Arita M."/>
            <person name="Imose N."/>
            <person name="Musashino K."/>
            <person name="Yuuki H."/>
            <person name="Oshima A."/>
            <person name="Sasaki N."/>
            <person name="Aotsuka S."/>
            <person name="Yoshikawa Y."/>
            <person name="Matsunawa H."/>
            <person name="Ichihara T."/>
            <person name="Shiohata N."/>
            <person name="Sano S."/>
            <person name="Moriya S."/>
            <person name="Momiyama H."/>
            <person name="Satoh N."/>
            <person name="Takami S."/>
            <person name="Terashima Y."/>
            <person name="Suzuki O."/>
            <person name="Nakagawa S."/>
            <person name="Senoh A."/>
            <person name="Mizoguchi H."/>
            <person name="Goto Y."/>
            <person name="Shimizu F."/>
            <person name="Wakebe H."/>
            <person name="Hishigaki H."/>
            <person name="Watanabe T."/>
            <person name="Sugiyama A."/>
            <person name="Takemoto M."/>
            <person name="Kawakami B."/>
            <person name="Yamazaki M."/>
            <person name="Watanabe K."/>
            <person name="Kumagai A."/>
            <person name="Itakura S."/>
            <person name="Fukuzumi Y."/>
            <person name="Fujimori Y."/>
            <person name="Komiyama M."/>
            <person name="Tashiro H."/>
            <person name="Tanigami A."/>
            <person name="Fujiwara T."/>
            <person name="Ono T."/>
            <person name="Yamada K."/>
            <person name="Fujii Y."/>
            <person name="Ozaki K."/>
            <person name="Hirao M."/>
            <person name="Ohmori Y."/>
            <person name="Kawabata A."/>
            <person name="Hikiji T."/>
            <person name="Kobatake N."/>
            <person name="Inagaki H."/>
            <person name="Ikema Y."/>
            <person name="Okamoto S."/>
            <person name="Okitani R."/>
            <person name="Kawakami T."/>
            <person name="Noguchi S."/>
            <person name="Itoh T."/>
            <person name="Shigeta K."/>
            <person name="Senba T."/>
            <person name="Matsumura K."/>
            <person name="Nakajima Y."/>
            <person name="Mizuno T."/>
            <person name="Morinaga M."/>
            <person name="Sasaki M."/>
            <person name="Togashi T."/>
            <person name="Oyama M."/>
            <person name="Hata H."/>
            <person name="Watanabe M."/>
            <person name="Komatsu T."/>
            <person name="Mizushima-Sugano J."/>
            <person name="Satoh T."/>
            <person name="Shirai Y."/>
            <person name="Takahashi Y."/>
            <person name="Nakagawa K."/>
            <person name="Okumura K."/>
            <person name="Nagase T."/>
            <person name="Nomura N."/>
            <person name="Kikuchi H."/>
            <person name="Masuho Y."/>
            <person name="Yamashita R."/>
            <person name="Nakai K."/>
            <person name="Yada T."/>
            <person name="Nakamura Y."/>
            <person name="Ohara O."/>
            <person name="Isogai T."/>
            <person name="Sugano S."/>
        </authorList>
    </citation>
    <scope>NUCLEOTIDE SEQUENCE [LARGE SCALE MRNA] (ISOFORM 1)</scope>
    <source>
        <tissue>Hippocampus</tissue>
    </source>
</reference>
<reference key="3">
    <citation type="submission" date="2005-03" db="EMBL/GenBank/DDBJ databases">
        <authorList>
            <person name="Totoki Y."/>
            <person name="Toyoda A."/>
            <person name="Takeda T."/>
            <person name="Sakaki Y."/>
            <person name="Tanaka A."/>
            <person name="Yokoyama S."/>
            <person name="Ohara O."/>
            <person name="Nagase T."/>
            <person name="Kikuno F.R."/>
        </authorList>
    </citation>
    <scope>NUCLEOTIDE SEQUENCE [LARGE SCALE MRNA] (ISOFORM 2)</scope>
    <source>
        <tissue>Brain</tissue>
    </source>
</reference>
<reference key="4">
    <citation type="journal article" date="2006" name="Nature">
        <title>The DNA sequence, annotation and analysis of human chromosome 3.</title>
        <authorList>
            <person name="Muzny D.M."/>
            <person name="Scherer S.E."/>
            <person name="Kaul R."/>
            <person name="Wang J."/>
            <person name="Yu J."/>
            <person name="Sudbrak R."/>
            <person name="Buhay C.J."/>
            <person name="Chen R."/>
            <person name="Cree A."/>
            <person name="Ding Y."/>
            <person name="Dugan-Rocha S."/>
            <person name="Gill R."/>
            <person name="Gunaratne P."/>
            <person name="Harris R.A."/>
            <person name="Hawes A.C."/>
            <person name="Hernandez J."/>
            <person name="Hodgson A.V."/>
            <person name="Hume J."/>
            <person name="Jackson A."/>
            <person name="Khan Z.M."/>
            <person name="Kovar-Smith C."/>
            <person name="Lewis L.R."/>
            <person name="Lozado R.J."/>
            <person name="Metzker M.L."/>
            <person name="Milosavljevic A."/>
            <person name="Miner G.R."/>
            <person name="Morgan M.B."/>
            <person name="Nazareth L.V."/>
            <person name="Scott G."/>
            <person name="Sodergren E."/>
            <person name="Song X.-Z."/>
            <person name="Steffen D."/>
            <person name="Wei S."/>
            <person name="Wheeler D.A."/>
            <person name="Wright M.W."/>
            <person name="Worley K.C."/>
            <person name="Yuan Y."/>
            <person name="Zhang Z."/>
            <person name="Adams C.Q."/>
            <person name="Ansari-Lari M.A."/>
            <person name="Ayele M."/>
            <person name="Brown M.J."/>
            <person name="Chen G."/>
            <person name="Chen Z."/>
            <person name="Clendenning J."/>
            <person name="Clerc-Blankenburg K.P."/>
            <person name="Chen R."/>
            <person name="Chen Z."/>
            <person name="Davis C."/>
            <person name="Delgado O."/>
            <person name="Dinh H.H."/>
            <person name="Dong W."/>
            <person name="Draper H."/>
            <person name="Ernst S."/>
            <person name="Fu G."/>
            <person name="Gonzalez-Garay M.L."/>
            <person name="Garcia D.K."/>
            <person name="Gillett W."/>
            <person name="Gu J."/>
            <person name="Hao B."/>
            <person name="Haugen E."/>
            <person name="Havlak P."/>
            <person name="He X."/>
            <person name="Hennig S."/>
            <person name="Hu S."/>
            <person name="Huang W."/>
            <person name="Jackson L.R."/>
            <person name="Jacob L.S."/>
            <person name="Kelly S.H."/>
            <person name="Kube M."/>
            <person name="Levy R."/>
            <person name="Li Z."/>
            <person name="Liu B."/>
            <person name="Liu J."/>
            <person name="Liu W."/>
            <person name="Lu J."/>
            <person name="Maheshwari M."/>
            <person name="Nguyen B.-V."/>
            <person name="Okwuonu G.O."/>
            <person name="Palmeiri A."/>
            <person name="Pasternak S."/>
            <person name="Perez L.M."/>
            <person name="Phelps K.A."/>
            <person name="Plopper F.J."/>
            <person name="Qiang B."/>
            <person name="Raymond C."/>
            <person name="Rodriguez R."/>
            <person name="Saenphimmachak C."/>
            <person name="Santibanez J."/>
            <person name="Shen H."/>
            <person name="Shen Y."/>
            <person name="Subramanian S."/>
            <person name="Tabor P.E."/>
            <person name="Verduzco D."/>
            <person name="Waldron L."/>
            <person name="Wang J."/>
            <person name="Wang J."/>
            <person name="Wang Q."/>
            <person name="Williams G.A."/>
            <person name="Wong G.K.-S."/>
            <person name="Yao Z."/>
            <person name="Zhang J."/>
            <person name="Zhang X."/>
            <person name="Zhao G."/>
            <person name="Zhou J."/>
            <person name="Zhou Y."/>
            <person name="Nelson D."/>
            <person name="Lehrach H."/>
            <person name="Reinhardt R."/>
            <person name="Naylor S.L."/>
            <person name="Yang H."/>
            <person name="Olson M."/>
            <person name="Weinstock G."/>
            <person name="Gibbs R.A."/>
        </authorList>
    </citation>
    <scope>NUCLEOTIDE SEQUENCE [LARGE SCALE GENOMIC DNA]</scope>
</reference>
<reference key="5">
    <citation type="submission" date="2005-07" db="EMBL/GenBank/DDBJ databases">
        <authorList>
            <person name="Mural R.J."/>
            <person name="Istrail S."/>
            <person name="Sutton G.G."/>
            <person name="Florea L."/>
            <person name="Halpern A.L."/>
            <person name="Mobarry C.M."/>
            <person name="Lippert R."/>
            <person name="Walenz B."/>
            <person name="Shatkay H."/>
            <person name="Dew I."/>
            <person name="Miller J.R."/>
            <person name="Flanigan M.J."/>
            <person name="Edwards N.J."/>
            <person name="Bolanos R."/>
            <person name="Fasulo D."/>
            <person name="Halldorsson B.V."/>
            <person name="Hannenhalli S."/>
            <person name="Turner R."/>
            <person name="Yooseph S."/>
            <person name="Lu F."/>
            <person name="Nusskern D.R."/>
            <person name="Shue B.C."/>
            <person name="Zheng X.H."/>
            <person name="Zhong F."/>
            <person name="Delcher A.L."/>
            <person name="Huson D.H."/>
            <person name="Kravitz S.A."/>
            <person name="Mouchard L."/>
            <person name="Reinert K."/>
            <person name="Remington K.A."/>
            <person name="Clark A.G."/>
            <person name="Waterman M.S."/>
            <person name="Eichler E.E."/>
            <person name="Adams M.D."/>
            <person name="Hunkapiller M.W."/>
            <person name="Myers E.W."/>
            <person name="Venter J.C."/>
        </authorList>
    </citation>
    <scope>NUCLEOTIDE SEQUENCE [LARGE SCALE GENOMIC DNA]</scope>
</reference>
<reference key="6">
    <citation type="journal article" date="2004" name="Genome Res.">
        <title>The status, quality, and expansion of the NIH full-length cDNA project: the Mammalian Gene Collection (MGC).</title>
        <authorList>
            <consortium name="The MGC Project Team"/>
        </authorList>
    </citation>
    <scope>NUCLEOTIDE SEQUENCE [LARGE SCALE MRNA] (ISOFORM 1)</scope>
    <source>
        <tissue>Lung</tissue>
    </source>
</reference>
<reference key="7">
    <citation type="journal article" date="1997" name="J. Biol. Chem.">
        <title>An atypical homeodomain in SATB1 promotes specific recognition of the key structural element in a matrix attachment region.</title>
        <authorList>
            <person name="Dickinson L.A."/>
            <person name="Dickinson C.D."/>
            <person name="Kohwi-Shigematsu T."/>
        </authorList>
    </citation>
    <scope>FUNCTION</scope>
    <scope>MUTAGENESIS OF ARG-646; ARG-648 AND 693-PHE--ASN-695</scope>
</reference>
<reference key="8">
    <citation type="journal article" date="1998" name="J. Cell Biol.">
        <title>The genomic sequences bound to special AT-rich sequence-binding protein 1 (SATB1) in vivo in Jurkat T cells are tightly associated with the nuclear matrix at the bases of the chromatin loops.</title>
        <authorList>
            <person name="de Belle I."/>
            <person name="Cai S."/>
            <person name="Kohwi-Shigematsu T."/>
        </authorList>
    </citation>
    <scope>FUNCTION</scope>
</reference>
<reference key="9">
    <citation type="journal article" date="1999" name="DNA Cell Biol.">
        <title>The gammaPE complex contains both SATB1 and HOXB2 and has positive and negative roles in human gamma-globin gene regulation.</title>
        <authorList>
            <person name="Case S.S."/>
            <person name="Huber P."/>
            <person name="Lloyd J.A."/>
        </authorList>
    </citation>
    <scope>FUNCTION</scope>
    <scope>IDENTIFICATION IN THE GAMMA-GLOBIN PROMOTER COMPLEX</scope>
    <scope>IDENTIFICATION IN THE ENHANCER BINDING FACTOR COMPLEX</scope>
</reference>
<reference key="10">
    <citation type="journal article" date="2000" name="Cell Death Differ.">
        <title>The fate of the nuclear matrix-associated-region-binding protein SATB1 during apoptosis.</title>
        <authorList>
            <person name="Gotzmann J."/>
            <person name="Meissner M."/>
            <person name="Gerner C."/>
        </authorList>
    </citation>
    <scope>CLEAVAGE BY CASPASES</scope>
    <scope>SUBCELLULAR LOCATION</scope>
</reference>
<reference key="11">
    <citation type="journal article" date="2001" name="Mol. Cell. Biol.">
        <title>SATB1 cleavage by caspase 6 disrupts PDZ domain-mediated dimerization, causing detachment from chromatin early in T-cell apoptosis.</title>
        <authorList>
            <person name="Galande S."/>
            <person name="Dickinson L.A."/>
            <person name="Mian I.S."/>
            <person name="Sikorska M."/>
            <person name="Kohwi-Shigematsu T."/>
        </authorList>
    </citation>
    <scope>FUNCTION</scope>
    <scope>MUTAGENESIS OF ASP-254</scope>
    <scope>SUBUNIT</scope>
    <scope>CLEAVAGE BY CASPASE-6</scope>
</reference>
<reference key="12">
    <citation type="journal article" date="2002" name="Genomics">
        <title>The thymocyte-specific MAR binding protein, SATB1, interacts in vitro with a novel variant of DNA-directed RNA polymerase II, subunit 11.</title>
        <authorList>
            <person name="Durrin L.K."/>
            <person name="Krontiris T.G."/>
        </authorList>
    </citation>
    <scope>INTERACTION WITH POLR2J2</scope>
</reference>
<reference key="13">
    <citation type="journal article" date="2002" name="Nature">
        <title>SATB1 targets chromatin remodelling to regulate genes over long distances.</title>
        <authorList>
            <person name="Yasui D."/>
            <person name="Miyano M."/>
            <person name="Cai S."/>
            <person name="Varga-Weisz P."/>
            <person name="Kohwi-Shigematsu T."/>
        </authorList>
    </citation>
    <scope>FUNCTION</scope>
</reference>
<reference key="14">
    <citation type="journal article" date="2003" name="Microbiol. Immunol.">
        <title>SATB1 makes a complex with p300 and represses gp91(phox) promoter activity.</title>
        <authorList>
            <person name="Fujii Y."/>
            <person name="Kumatori A."/>
            <person name="Nakamura M."/>
        </authorList>
    </citation>
    <scope>INTERACTION WITH EP300</scope>
</reference>
<reference key="15">
    <citation type="journal article" date="2003" name="Nat. Genet.">
        <title>Tissue-specific nuclear architecture and gene expression regulated by SATB1.</title>
        <authorList>
            <person name="Cai S."/>
            <person name="Han H.-J."/>
            <person name="Kohwi-Shigematsu T."/>
        </authorList>
    </citation>
    <scope>FUNCTION</scope>
    <scope>SUBCELLULAR LOCATION</scope>
</reference>
<reference key="16">
    <citation type="journal article" date="2005" name="Blood">
        <title>SATB1 family protein expressed during early erythroid differentiation modifies globin gene expression.</title>
        <authorList>
            <person name="Wen J."/>
            <person name="Huang S."/>
            <person name="Rogers H."/>
            <person name="Dickinson L.A."/>
            <person name="Kohwi-Shigematsu T."/>
            <person name="Noguchi C.T."/>
        </authorList>
    </citation>
    <scope>FUNCTION</scope>
</reference>
<reference key="17">
    <citation type="journal article" date="2005" name="Cell Cycle">
        <title>A nuclear targeting determinant for SATB1, a genome organizer in the T cell lineage.</title>
        <authorList>
            <person name="Nakayama Y."/>
            <person name="Mian I.S."/>
            <person name="Kohwi-Shigematsu T."/>
            <person name="Ogawa T."/>
        </authorList>
    </citation>
    <scope>SUBCELLULAR LOCATION</scope>
    <scope>MUTAGENESIS OF LYS-29; ARG-32; GLU-34 AND ASN-36</scope>
    <scope>NUCLEAR LOCALIZATION SIGNAL</scope>
</reference>
<reference key="18">
    <citation type="journal article" date="2005" name="J. Biol. Chem.">
        <title>Systematic identification and analysis of mammalian small ubiquitin-like modifier substrates.</title>
        <authorList>
            <person name="Gocke C.B."/>
            <person name="Yu H."/>
            <person name="Kang J."/>
        </authorList>
    </citation>
    <scope>SUMOYLATION</scope>
</reference>
<reference key="19">
    <citation type="journal article" date="2005" name="J. Biol. Chem.">
        <title>Nuclear matrix binding regulates SATB1-mediated transcriptional repression.</title>
        <authorList>
            <person name="Seo J."/>
            <person name="Lozano M.M."/>
            <person name="Dudley J.P."/>
        </authorList>
    </citation>
    <scope>SUBCELLULAR LOCATION</scope>
    <scope>NUCLEAR MATRIX TARGETING SEQUENCE</scope>
</reference>
<reference key="20">
    <citation type="journal article" date="2005" name="J. Cell Sci.">
        <title>Dynein light chain rp3 acts as a nuclear matrix-associated transcriptional modulator in a dynein-independent pathway.</title>
        <authorList>
            <person name="Yeh T.-Y."/>
            <person name="Chuang J.-Z."/>
            <person name="Sung C.-H."/>
        </authorList>
    </citation>
    <scope>INTERACTION WITH DYNLT3</scope>
    <scope>SUBCELLULAR LOCATION</scope>
</reference>
<reference key="21">
    <citation type="journal article" date="2005" name="Mol. Cell. Biol.">
        <title>Displacement of SATB1-bound histone deacetylase 1 corepressor by the human immunodeficiency virus type 1 transactivator induces expression of interleukin-2 and its receptor in T cells.</title>
        <authorList>
            <person name="Kumar P.P."/>
            <person name="Purbey P.K."/>
            <person name="Ravi D.S."/>
            <person name="Mitra D."/>
            <person name="Galande S."/>
        </authorList>
    </citation>
    <scope>FUNCTION</scope>
    <scope>INTERACTION WITH HIV-1 TAT (MICROBIAL INFECTION) AND HDAC1</scope>
</reference>
<reference key="22">
    <citation type="journal article" date="2006" name="Cell Biol. Int.">
        <title>The behavior of SATB1, a MAR-binding protein, in response to apoptosis stimulation.</title>
        <authorList>
            <person name="Sun Y."/>
            <person name="Wang T."/>
            <person name="Su Y."/>
            <person name="Yin Y."/>
            <person name="Xu S."/>
            <person name="Ma C."/>
            <person name="Han X."/>
        </authorList>
    </citation>
    <scope>FUNCTION</scope>
    <scope>CLEAVAGE BY CASPASE-3</scope>
</reference>
<reference key="23">
    <citation type="journal article" date="2006" name="Mol. Cell">
        <title>Phosphorylation of SATB1, a global gene regulator, acts as a molecular switch regulating its transcriptional activity in vivo.</title>
        <authorList>
            <person name="Kumar P.P."/>
            <person name="Purbey P.K."/>
            <person name="Sinha C.K."/>
            <person name="Notani D."/>
            <person name="Limaye A."/>
            <person name="Jayani R.S."/>
            <person name="Galande S."/>
        </authorList>
    </citation>
    <scope>FUNCTION</scope>
    <scope>IDENTIFICATION BY MASS SPECTROMETRY</scope>
    <scope>INTERACTION WITH HDAC1 AND PCAF</scope>
    <scope>MUTAGENESIS OF LYS-136 AND SER-185</scope>
    <scope>ACETYLATION AT LYS-136</scope>
    <scope>PHOSPHORYLATION AT SER-185</scope>
</reference>
<reference key="24">
    <citation type="journal article" date="2007" name="J. Virol.">
        <title>SATB1-binding sequences and Alu-like motifs define a unique chromatin context in the vicinity of human immunodeficiency virus type 1 integration sites.</title>
        <authorList>
            <person name="Kumar P.P."/>
            <person name="Mehta S."/>
            <person name="Purbey P.K."/>
            <person name="Notani D."/>
            <person name="Jayani R.S."/>
            <person name="Purohit H.J."/>
            <person name="Raje D.V."/>
            <person name="Ravi D.S."/>
            <person name="Bhonde R.R."/>
            <person name="Mitra D."/>
            <person name="Galande S."/>
        </authorList>
    </citation>
    <scope>FUNCTION</scope>
</reference>
<reference key="25">
    <citation type="journal article" date="2007" name="Nat. Cell Biol.">
        <title>Functional interaction between PML and SATB1 regulates chromatin-loop architecture and transcription of the MHC class I locus.</title>
        <authorList>
            <person name="Kumar P.P."/>
            <person name="Bischof O."/>
            <person name="Purbey P.K."/>
            <person name="Notani D."/>
            <person name="Urlaub H."/>
            <person name="Dejean A."/>
            <person name="Galande S."/>
        </authorList>
    </citation>
    <scope>FUNCTION</scope>
    <scope>INTERACTION WITH PML</scope>
</reference>
<reference key="26">
    <citation type="journal article" date="2007" name="Virology">
        <title>Cellular homeoproteins, SATB1 and CDP, bind to the unique region between the human cytomegalovirus UL127 and major immediate-early genes.</title>
        <authorList>
            <person name="Lee J."/>
            <person name="Klase Z."/>
            <person name="Gao X."/>
            <person name="Caldwell J.S."/>
            <person name="Stinski M.F."/>
            <person name="Kashanchi F."/>
            <person name="Chao S.-H."/>
        </authorList>
    </citation>
    <scope>INTERACTION WITH CYTOMEGALOVIRUS UNIQUE REGION</scope>
</reference>
<reference key="27">
    <citation type="journal article" date="2008" name="J. Biol. Chem.">
        <title>SUMO conjugation to the matrix attachment region-binding protein, special AT-rich sequence-binding protein-1 (SATB1), targets SATB1 to promyelocytic nuclear bodies where it undergoes caspase cleavage.</title>
        <authorList>
            <person name="Tan J.-A.T."/>
            <person name="Sun Y."/>
            <person name="Song J."/>
            <person name="Chen Y."/>
            <person name="Krontiris T.G."/>
            <person name="Durrin L.K."/>
        </authorList>
    </citation>
    <scope>SUMOYLATION AT LYS-744</scope>
    <scope>MUTAGENESIS OF LYS-411; LYS-486; LYS-720 AND LYS-744</scope>
    <scope>SUBCELLULAR LOCATION</scope>
    <scope>CLEAVAGE BY CASPASE-6</scope>
</reference>
<reference key="28">
    <citation type="journal article" date="2008" name="Nature">
        <title>SATB1 reprogrammes gene expression to promote breast tumour growth and metastasis.</title>
        <authorList>
            <person name="Han H.-J."/>
            <person name="Russo J."/>
            <person name="Kohwi Y."/>
            <person name="Kohwi-Shigematsu T."/>
        </authorList>
    </citation>
    <scope>FUNCTION</scope>
    <scope>ROLE IN BREAST TUMOR GROWTH AND METASTASIS</scope>
</reference>
<reference key="29">
    <citation type="journal article" date="2008" name="Nucleic Acids Res.">
        <title>PDZ domain-mediated dimerization and homeodomain-directed specificity are required for high-affinity DNA binding by SATB1.</title>
        <authorList>
            <person name="Purbey P.K."/>
            <person name="Singh S."/>
            <person name="Kumar P.P."/>
            <person name="Mehta S."/>
            <person name="Ganesh K.N."/>
            <person name="Mitra D."/>
            <person name="Galande S."/>
        </authorList>
    </citation>
    <scope>SUBUNIT</scope>
    <scope>INTERACTION WITH DNA AND NUCLEAR MATRIX</scope>
</reference>
<reference key="30">
    <citation type="journal article" date="2009" name="Biochem. Biophys. Res. Commun.">
        <title>SATB1 regulates beta-like globin genes through matrix related nuclear relocation of the cluster.</title>
        <authorList>
            <person name="Gong H."/>
            <person name="Wang Z."/>
            <person name="Zhao G.-W."/>
            <person name="Lv X."/>
            <person name="Wei G.-H."/>
            <person name="Wang L."/>
            <person name="Liu D.-P."/>
            <person name="Liang C.-C."/>
        </authorList>
    </citation>
    <scope>FUNCTION</scope>
</reference>
<reference key="31">
    <citation type="journal article" date="2010" name="Mol. Biol. Rep.">
        <title>SATB1 binds an intronic MAR sequence in human PI3kgamma in vitro.</title>
        <authorList>
            <person name="Cai R."/>
            <person name="Xu W."/>
            <person name="Dai B."/>
            <person name="Cai X."/>
            <person name="Xu R."/>
            <person name="Lu J."/>
        </authorList>
    </citation>
    <scope>FUNCTION</scope>
</reference>
<reference key="32">
    <citation type="journal article" date="2009" name="Mol. Cell. Biol.">
        <title>Acetylation-dependent interaction of SATB1 and CtBP1 mediates transcriptional repression by SATB1.</title>
        <authorList>
            <person name="Purbey P.K."/>
            <person name="Singh S."/>
            <person name="Notani D."/>
            <person name="Kumar P.P."/>
            <person name="Limaye A.S."/>
            <person name="Galande S."/>
        </authorList>
    </citation>
    <scope>FUNCTION</scope>
    <scope>MUTAGENESIS OF LYS-136</scope>
    <scope>INTERACTION WITH CTBP1</scope>
</reference>
<reference key="33">
    <citation type="journal article" date="2009" name="PLoS ONE">
        <title>Inter-MAR association contributes to transcriptionally active looping events in human beta-globin gene cluster.</title>
        <authorList>
            <person name="Wang L."/>
            <person name="Di L.-J."/>
            <person name="Lv X."/>
            <person name="Zheng W."/>
            <person name="Xue Z."/>
            <person name="Guo Z.-C."/>
            <person name="Liu D.-P."/>
            <person name="Liang C.-C."/>
        </authorList>
    </citation>
    <scope>FUNCTION</scope>
</reference>
<reference key="34">
    <citation type="journal article" date="2017" name="Nat. Struct. Mol. Biol.">
        <title>Site-specific mapping of the human SUMO proteome reveals co-modification with phosphorylation.</title>
        <authorList>
            <person name="Hendriks I.A."/>
            <person name="Lyon D."/>
            <person name="Young C."/>
            <person name="Jensen L.J."/>
            <person name="Vertegaal A.C."/>
            <person name="Nielsen M.L."/>
        </authorList>
    </citation>
    <scope>SUMOYLATION [LARGE SCALE ANALYSIS] AT LYS-51</scope>
    <scope>IDENTIFICATION BY MASS SPECTROMETRY [LARGE SCALE ANALYSIS]</scope>
</reference>
<reference key="35">
    <citation type="journal article" date="2006" name="J. Biol. Chem.">
        <title>Solution structure and DNA-binding mode of the matrix attachment region-binding domain of the transcription factor SATB1 that regulates the T-cell maturation.</title>
        <authorList>
            <person name="Yamaguchi H."/>
            <person name="Tateno M."/>
            <person name="Yamasaki K."/>
        </authorList>
    </citation>
    <scope>STRUCTURE BY NMR OF 353-490 IN COMPLEX WITH MAR DNA</scope>
    <scope>MUTAGENESIS OF SER-373; ARG-380; LYS-384; ARG-395; SER-406; ARG-410; LYS-416; ARG-427; ARG-442; SER-451 AND LYS-475</scope>
</reference>
<reference key="36">
    <citation type="journal article" date="2007" name="Nucleic Acids Res.">
        <title>Structural basis for recognition of the matrix attachment region of DNA by transcription factor SATB1.</title>
        <authorList>
            <person name="Yamasaki K."/>
            <person name="Akiba T."/>
            <person name="Yamasaki T."/>
            <person name="Harata K."/>
        </authorList>
    </citation>
    <scope>X-RAY CRYSTALLOGRAPHY (1.75 ANGSTROMS) OF 368-452 IN COMPLEX WITH MAR DNA</scope>
    <scope>MUTAGENESIS OF GLN-402 AND GLY-403</scope>
</reference>
<reference key="37">
    <citation type="journal article" date="2021" name="Am. J. Hum. Genet.">
        <title>Mutation-specific pathophysiological mechanisms define different neurodevelopmental disorders associated with SATB1 dysfunction.</title>
        <authorList>
            <consortium name="DDD Study"/>
            <person name="den Hoed J."/>
            <person name="de Boer E."/>
            <person name="Voisin N."/>
            <person name="Dingemans A.J.M."/>
            <person name="Guex N."/>
            <person name="Wiel L."/>
            <person name="Nellaker C."/>
            <person name="Amudhavalli S.M."/>
            <person name="Banka S."/>
            <person name="Bena F.S."/>
            <person name="Ben-Zeev B."/>
            <person name="Bonagura V.R."/>
            <person name="Bruel A.L."/>
            <person name="Brunet T."/>
            <person name="Brunner H.G."/>
            <person name="Chew H.B."/>
            <person name="Chrast J."/>
            <person name="Cimbalistiene L."/>
            <person name="Coon H."/>
            <person name="Delot E.C."/>
            <person name="Demurger F."/>
            <person name="Denomme-Pichon A.S."/>
            <person name="Depienne C."/>
            <person name="Donnai D."/>
            <person name="Dyment D.A."/>
            <person name="Elpeleg O."/>
            <person name="Faivre L."/>
            <person name="Gilissen C."/>
            <person name="Granger L."/>
            <person name="Haber B."/>
            <person name="Hachiya Y."/>
            <person name="Abedi Y.H."/>
            <person name="Hanebeck J."/>
            <person name="Hehir-Kwa J.Y."/>
            <person name="Horist B."/>
            <person name="Itai T."/>
            <person name="Jackson A."/>
            <person name="Jewell R."/>
            <person name="Jones K.L."/>
            <person name="Joss S."/>
            <person name="Kashii H."/>
            <person name="Kato M."/>
            <person name="Kattentidt-Mouravieva A.A."/>
            <person name="Kok F."/>
            <person name="Kotzaeridou U."/>
            <person name="Krishnamurthy V."/>
            <person name="Kucinskas V."/>
            <person name="Kuechler A."/>
            <person name="Lavillaureix A."/>
            <person name="Liu P."/>
            <person name="Manwaring L."/>
            <person name="Matsumoto N."/>
            <person name="Mazel B."/>
            <person name="McWalter K."/>
            <person name="Meiner V."/>
            <person name="Mikati M.A."/>
            <person name="Miyatake S."/>
            <person name="Mizuguchi T."/>
            <person name="Moey L.H."/>
            <person name="Mohammed S."/>
            <person name="Mor-Shaked H."/>
            <person name="Mountford H."/>
            <person name="Newbury-Ecob R."/>
            <person name="Odent S."/>
            <person name="Orec L."/>
            <person name="Osmond M."/>
            <person name="Palculict T.B."/>
            <person name="Parker M."/>
            <person name="Petersen A.K."/>
            <person name="Pfundt R."/>
            <person name="Preiksaitiene E."/>
            <person name="Radtke K."/>
            <person name="Ranza E."/>
            <person name="Rosenfeld J.A."/>
            <person name="Santiago-Sim T."/>
            <person name="Schwager C."/>
            <person name="Sinnema M."/>
            <person name="Snijders Blok L."/>
            <person name="Spillmann R.C."/>
            <person name="Stegmann A.P.A."/>
            <person name="Thiffault I."/>
            <person name="Tran L."/>
            <person name="Vaknin-Dembinsky A."/>
            <person name="Vedovato-Dos-Santos J.H."/>
            <person name="Schrier Vergano S.A."/>
            <person name="Vilain E."/>
            <person name="Vitobello A."/>
            <person name="Wagner M."/>
            <person name="Waheeb A."/>
            <person name="Willing M."/>
            <person name="Zuccarelli B."/>
            <person name="Kini U."/>
            <person name="Newbury D.F."/>
            <person name="Kleefstra T."/>
            <person name="Reymond A."/>
            <person name="Fisher S.E."/>
            <person name="Vissers L.E.L.M."/>
        </authorList>
    </citation>
    <scope>VARIANTS DHDBV LEU-181; VAL-323; ARG-402; GLN-407; GLY-407; LYS-413; ARG-420; ARG-525; GLN-530; GLY-530; LYS-530; LYS-547; ARG-577; ARG-619 AND VAL-682</scope>
    <scope>CHARACTERIZATION OF VARIANTS DHDBV GLY-407; ARG-420; GLN-530; LYS-530; LYS-547 AND VAL-682</scope>
    <scope>VARIANTS DEFDA 410-ARG--ASP-763 DEL AND 694-GLN--ASP-763 DEL</scope>
    <scope>VARIANTS LEU-366; LEU-519 AND THR-573</scope>
    <scope>CHARACTERIZATION OF VARIANTS LEU-366; LEU-519 AND THR-573</scope>
    <scope>CHARACTERIZATION OF VARIANTS DEFDA 410-GLN--ASP-763 DEL AND 694-GLN--ASP-763 DEL</scope>
    <scope>SUBCELLULAR LOCATION</scope>
    <scope>FUNCTION</scope>
</reference>